<dbReference type="EMBL" id="BA000002">
    <property type="protein sequence ID" value="BAA80774.1"/>
    <property type="molecule type" value="Genomic_DNA"/>
</dbReference>
<dbReference type="PIR" id="A72561">
    <property type="entry name" value="A72561"/>
</dbReference>
<dbReference type="RefSeq" id="WP_010866584.1">
    <property type="nucleotide sequence ID" value="NC_000854.2"/>
</dbReference>
<dbReference type="SMR" id="Q9YB24"/>
<dbReference type="STRING" id="272557.APE_1771"/>
<dbReference type="EnsemblBacteria" id="BAA80774">
    <property type="protein sequence ID" value="BAA80774"/>
    <property type="gene ID" value="APE_1771"/>
</dbReference>
<dbReference type="GeneID" id="1446230"/>
<dbReference type="KEGG" id="ape:APE_1771"/>
<dbReference type="PATRIC" id="fig|272557.25.peg.1189"/>
<dbReference type="eggNOG" id="arCOG01728">
    <property type="taxonomic scope" value="Archaea"/>
</dbReference>
<dbReference type="Proteomes" id="UP000002518">
    <property type="component" value="Chromosome"/>
</dbReference>
<dbReference type="CDD" id="cd07361">
    <property type="entry name" value="MEMO_like"/>
    <property type="match status" value="1"/>
</dbReference>
<dbReference type="Gene3D" id="3.40.830.10">
    <property type="entry name" value="LigB-like"/>
    <property type="match status" value="1"/>
</dbReference>
<dbReference type="HAMAP" id="MF_00055">
    <property type="entry name" value="MEMO1"/>
    <property type="match status" value="1"/>
</dbReference>
<dbReference type="InterPro" id="IPR002737">
    <property type="entry name" value="MEMO1_fam"/>
</dbReference>
<dbReference type="NCBIfam" id="TIGR04336">
    <property type="entry name" value="AmmeMemoSam_B"/>
    <property type="match status" value="1"/>
</dbReference>
<dbReference type="PANTHER" id="PTHR11060">
    <property type="entry name" value="PROTEIN MEMO1"/>
    <property type="match status" value="1"/>
</dbReference>
<dbReference type="PANTHER" id="PTHR11060:SF0">
    <property type="entry name" value="PROTEIN MEMO1"/>
    <property type="match status" value="1"/>
</dbReference>
<dbReference type="Pfam" id="PF01875">
    <property type="entry name" value="Memo"/>
    <property type="match status" value="1"/>
</dbReference>
<dbReference type="SUPFAM" id="SSF53213">
    <property type="entry name" value="LigB-like"/>
    <property type="match status" value="1"/>
</dbReference>
<proteinExistence type="inferred from homology"/>
<evidence type="ECO:0000255" key="1">
    <source>
        <dbReference type="HAMAP-Rule" id="MF_00055"/>
    </source>
</evidence>
<organism>
    <name type="scientific">Aeropyrum pernix (strain ATCC 700893 / DSM 11879 / JCM 9820 / NBRC 100138 / K1)</name>
    <dbReference type="NCBI Taxonomy" id="272557"/>
    <lineage>
        <taxon>Archaea</taxon>
        <taxon>Thermoproteota</taxon>
        <taxon>Thermoprotei</taxon>
        <taxon>Desulfurococcales</taxon>
        <taxon>Desulfurococcaceae</taxon>
        <taxon>Aeropyrum</taxon>
    </lineage>
</organism>
<accession>Q9YB24</accession>
<keyword id="KW-1185">Reference proteome</keyword>
<comment type="similarity">
    <text evidence="1">Belongs to the MEMO1 family.</text>
</comment>
<reference key="1">
    <citation type="journal article" date="1999" name="DNA Res.">
        <title>Complete genome sequence of an aerobic hyper-thermophilic crenarchaeon, Aeropyrum pernix K1.</title>
        <authorList>
            <person name="Kawarabayasi Y."/>
            <person name="Hino Y."/>
            <person name="Horikawa H."/>
            <person name="Yamazaki S."/>
            <person name="Haikawa Y."/>
            <person name="Jin-no K."/>
            <person name="Takahashi M."/>
            <person name="Sekine M."/>
            <person name="Baba S."/>
            <person name="Ankai A."/>
            <person name="Kosugi H."/>
            <person name="Hosoyama A."/>
            <person name="Fukui S."/>
            <person name="Nagai Y."/>
            <person name="Nishijima K."/>
            <person name="Nakazawa H."/>
            <person name="Takamiya M."/>
            <person name="Masuda S."/>
            <person name="Funahashi T."/>
            <person name="Tanaka T."/>
            <person name="Kudoh Y."/>
            <person name="Yamazaki J."/>
            <person name="Kushida N."/>
            <person name="Oguchi A."/>
            <person name="Aoki K."/>
            <person name="Kubota K."/>
            <person name="Nakamura Y."/>
            <person name="Nomura N."/>
            <person name="Sako Y."/>
            <person name="Kikuchi H."/>
        </authorList>
    </citation>
    <scope>NUCLEOTIDE SEQUENCE [LARGE SCALE GENOMIC DNA]</scope>
    <source>
        <strain>ATCC 700893 / DSM 11879 / JCM 9820 / NBRC 100138 / K1</strain>
    </source>
</reference>
<feature type="chain" id="PRO_0000134376" description="MEMO1 family protein APE_1771">
    <location>
        <begin position="1"/>
        <end position="281"/>
    </location>
</feature>
<name>Y1771_AERPE</name>
<sequence>MKIRNPAHAGTFYPATREELVKSIESSFTHPLGPGRLPQRGGGSGEQAIAYIPPHAGYMYSGPIAAHVYYDMSLGRKPDVVVLLGPNHTGLGLAASLWDEGVWRTPLGEVEVDSEAGRLVVEYSGIVAPDDEGHIYEHSLEVQLPFLQYLYGGDFRIVPIVVLHQTLDISIRIARAYHRLREENGVNAVLVATSDLNHYEPYEENKRKDLLLLKAIEEGDPEAVFKTIEAHAISACGPSPIAAAVEAGRLAGVKPRVLAYANSGDVTGEKAWVVGYPAVRV</sequence>
<protein>
    <recommendedName>
        <fullName evidence="1">MEMO1 family protein APE_1771</fullName>
    </recommendedName>
</protein>
<gene>
    <name type="ordered locus">APE_1771</name>
</gene>